<name>CASK_LAMGU</name>
<dbReference type="EMBL" id="U53890">
    <property type="protein sequence ID" value="AAB08415.1"/>
    <property type="molecule type" value="Genomic_DNA"/>
</dbReference>
<dbReference type="GlyCosmos" id="Q28451">
    <property type="glycosylation" value="3 sites, No reported glycans"/>
</dbReference>
<dbReference type="GO" id="GO:0005615">
    <property type="term" value="C:extracellular space"/>
    <property type="evidence" value="ECO:0007669"/>
    <property type="project" value="TreeGrafter"/>
</dbReference>
<dbReference type="GO" id="GO:0007595">
    <property type="term" value="P:lactation"/>
    <property type="evidence" value="ECO:0007669"/>
    <property type="project" value="TreeGrafter"/>
</dbReference>
<dbReference type="GO" id="GO:0050821">
    <property type="term" value="P:protein stabilization"/>
    <property type="evidence" value="ECO:0007669"/>
    <property type="project" value="TreeGrafter"/>
</dbReference>
<dbReference type="InterPro" id="IPR000117">
    <property type="entry name" value="Casein_kappa"/>
</dbReference>
<dbReference type="PANTHER" id="PTHR11470">
    <property type="entry name" value="KAPPA CASEIN"/>
    <property type="match status" value="1"/>
</dbReference>
<dbReference type="PANTHER" id="PTHR11470:SF2">
    <property type="entry name" value="KAPPA-CASEIN"/>
    <property type="match status" value="1"/>
</dbReference>
<dbReference type="Pfam" id="PF00997">
    <property type="entry name" value="Casein_kappa"/>
    <property type="match status" value="1"/>
</dbReference>
<accession>Q28451</accession>
<evidence type="ECO:0000250" key="1"/>
<evidence type="ECO:0000250" key="2">
    <source>
        <dbReference type="UniProtKB" id="P02668"/>
    </source>
</evidence>
<evidence type="ECO:0000250" key="3">
    <source>
        <dbReference type="UniProtKB" id="P02670"/>
    </source>
</evidence>
<evidence type="ECO:0000256" key="4">
    <source>
        <dbReference type="SAM" id="MobiDB-lite"/>
    </source>
</evidence>
<evidence type="ECO:0000305" key="5"/>
<organism>
    <name type="scientific">Lama guanicoe</name>
    <name type="common">Guanaco</name>
    <name type="synonym">Lama glama guanicoe</name>
    <dbReference type="NCBI Taxonomy" id="9840"/>
    <lineage>
        <taxon>Eukaryota</taxon>
        <taxon>Metazoa</taxon>
        <taxon>Chordata</taxon>
        <taxon>Craniata</taxon>
        <taxon>Vertebrata</taxon>
        <taxon>Euteleostomi</taxon>
        <taxon>Mammalia</taxon>
        <taxon>Eutheria</taxon>
        <taxon>Laurasiatheria</taxon>
        <taxon>Artiodactyla</taxon>
        <taxon>Tylopoda</taxon>
        <taxon>Camelidae</taxon>
        <taxon>Lama</taxon>
    </lineage>
</organism>
<keyword id="KW-0325">Glycoprotein</keyword>
<keyword id="KW-0494">Milk protein</keyword>
<keyword id="KW-0597">Phosphoprotein</keyword>
<keyword id="KW-0964">Secreted</keyword>
<protein>
    <recommendedName>
        <fullName>Kappa-casein</fullName>
    </recommendedName>
</protein>
<sequence>YGINYYQHRLAVPINNQFIPYPNYAKPVAIRLHAQIPQCQALPNIDPPTVERRPRPRPSFIAIPPKKTQDKTVIPAINTVATVEPPVIPTAEPVVNTVVIAEASSEFITTSTPETTTVQITSTEI</sequence>
<gene>
    <name type="primary">CSN3</name>
    <name type="synonym">CSN10</name>
    <name type="synonym">CSNK</name>
</gene>
<proteinExistence type="evidence at transcript level"/>
<feature type="chain" id="PRO_0000144112" description="Kappa-casein">
    <location>
        <begin position="1" status="less than"/>
        <end position="125"/>
    </location>
</feature>
<feature type="region of interest" description="Disordered" evidence="4">
    <location>
        <begin position="42"/>
        <end position="63"/>
    </location>
</feature>
<feature type="site" description="Cleavage; by chymosin/rennin" evidence="1">
    <location>
        <begin position="59"/>
        <end position="60"/>
    </location>
</feature>
<feature type="modified residue" description="Phosphoserine; alternate" evidence="2">
    <location>
        <position position="104"/>
    </location>
</feature>
<feature type="modified residue" description="Phosphoserine" evidence="3">
    <location>
        <position position="122"/>
    </location>
</feature>
<feature type="glycosylation site" description="O-linked (GalNAc...) threonine" evidence="2">
    <location>
        <position position="97"/>
    </location>
</feature>
<feature type="glycosylation site" description="O-linked (GalNAc...) serine; alternate" evidence="2">
    <location>
        <position position="104"/>
    </location>
</feature>
<feature type="glycosylation site" description="O-linked (GalNAc...) threonine" evidence="2">
    <location>
        <position position="121"/>
    </location>
</feature>
<feature type="non-terminal residue">
    <location>
        <position position="1"/>
    </location>
</feature>
<reference key="1">
    <citation type="journal article" date="1996" name="Mol. Biol. Evol.">
        <title>Evidence from milk casein genes that cetaceans are close relatives of hippopotamid artiodactyls.</title>
        <authorList>
            <person name="Gatesy J."/>
            <person name="Hayashi C."/>
            <person name="Cronin M.A."/>
            <person name="Arctander P."/>
        </authorList>
    </citation>
    <scope>NUCLEOTIDE SEQUENCE [GENOMIC DNA]</scope>
</reference>
<comment type="function">
    <text>Kappa-casein stabilizes micelle formation, preventing casein precipitation in milk.</text>
</comment>
<comment type="subcellular location">
    <subcellularLocation>
        <location>Secreted</location>
    </subcellularLocation>
</comment>
<comment type="tissue specificity">
    <text>Mammary gland specific. Secreted in milk.</text>
</comment>
<comment type="similarity">
    <text evidence="5">Belongs to the kappa-casein family.</text>
</comment>